<comment type="function">
    <text evidence="1">Required for rescue of stalled ribosomes mediated by trans-translation. Binds to transfer-messenger RNA (tmRNA), required for stable association of tmRNA with ribosomes. tmRNA and SmpB together mimic tRNA shape, replacing the anticodon stem-loop with SmpB. tmRNA is encoded by the ssrA gene; the 2 termini fold to resemble tRNA(Ala) and it encodes a 'tag peptide', a short internal open reading frame. During trans-translation Ala-aminoacylated tmRNA acts like a tRNA, entering the A-site of stalled ribosomes, displacing the stalled mRNA. The ribosome then switches to translate the ORF on the tmRNA; the nascent peptide is terminated with the 'tag peptide' encoded by the tmRNA and targeted for degradation. The ribosome is freed to recommence translation, which seems to be the essential function of trans-translation.</text>
</comment>
<comment type="subcellular location">
    <subcellularLocation>
        <location evidence="1">Cytoplasm</location>
    </subcellularLocation>
    <text evidence="1">The tmRNA-SmpB complex associates with stalled 70S ribosomes.</text>
</comment>
<comment type="similarity">
    <text evidence="1">Belongs to the SmpB family.</text>
</comment>
<accession>B4SS56</accession>
<evidence type="ECO:0000255" key="1">
    <source>
        <dbReference type="HAMAP-Rule" id="MF_00023"/>
    </source>
</evidence>
<keyword id="KW-0963">Cytoplasm</keyword>
<keyword id="KW-0694">RNA-binding</keyword>
<dbReference type="EMBL" id="CP001111">
    <property type="protein sequence ID" value="ACF51295.1"/>
    <property type="molecule type" value="Genomic_DNA"/>
</dbReference>
<dbReference type="RefSeq" id="WP_012510749.1">
    <property type="nucleotide sequence ID" value="NC_011071.1"/>
</dbReference>
<dbReference type="SMR" id="B4SS56"/>
<dbReference type="STRING" id="391008.Smal_1590"/>
<dbReference type="KEGG" id="smt:Smal_1590"/>
<dbReference type="eggNOG" id="COG0691">
    <property type="taxonomic scope" value="Bacteria"/>
</dbReference>
<dbReference type="HOGENOM" id="CLU_108953_3_0_6"/>
<dbReference type="OrthoDB" id="9805462at2"/>
<dbReference type="Proteomes" id="UP000001867">
    <property type="component" value="Chromosome"/>
</dbReference>
<dbReference type="GO" id="GO:0005829">
    <property type="term" value="C:cytosol"/>
    <property type="evidence" value="ECO:0007669"/>
    <property type="project" value="TreeGrafter"/>
</dbReference>
<dbReference type="GO" id="GO:0003723">
    <property type="term" value="F:RNA binding"/>
    <property type="evidence" value="ECO:0007669"/>
    <property type="project" value="UniProtKB-UniRule"/>
</dbReference>
<dbReference type="GO" id="GO:0070929">
    <property type="term" value="P:trans-translation"/>
    <property type="evidence" value="ECO:0007669"/>
    <property type="project" value="UniProtKB-UniRule"/>
</dbReference>
<dbReference type="CDD" id="cd09294">
    <property type="entry name" value="SmpB"/>
    <property type="match status" value="1"/>
</dbReference>
<dbReference type="Gene3D" id="2.40.280.10">
    <property type="match status" value="1"/>
</dbReference>
<dbReference type="HAMAP" id="MF_00023">
    <property type="entry name" value="SmpB"/>
    <property type="match status" value="1"/>
</dbReference>
<dbReference type="InterPro" id="IPR023620">
    <property type="entry name" value="SmpB"/>
</dbReference>
<dbReference type="InterPro" id="IPR000037">
    <property type="entry name" value="SsrA-bd_prot"/>
</dbReference>
<dbReference type="InterPro" id="IPR020081">
    <property type="entry name" value="SsrA-bd_prot_CS"/>
</dbReference>
<dbReference type="NCBIfam" id="NF003843">
    <property type="entry name" value="PRK05422.1"/>
    <property type="match status" value="1"/>
</dbReference>
<dbReference type="NCBIfam" id="TIGR00086">
    <property type="entry name" value="smpB"/>
    <property type="match status" value="1"/>
</dbReference>
<dbReference type="PANTHER" id="PTHR30308:SF2">
    <property type="entry name" value="SSRA-BINDING PROTEIN"/>
    <property type="match status" value="1"/>
</dbReference>
<dbReference type="PANTHER" id="PTHR30308">
    <property type="entry name" value="TMRNA-BINDING COMPONENT OF TRANS-TRANSLATION TAGGING COMPLEX"/>
    <property type="match status" value="1"/>
</dbReference>
<dbReference type="Pfam" id="PF01668">
    <property type="entry name" value="SmpB"/>
    <property type="match status" value="1"/>
</dbReference>
<dbReference type="SUPFAM" id="SSF74982">
    <property type="entry name" value="Small protein B (SmpB)"/>
    <property type="match status" value="1"/>
</dbReference>
<dbReference type="PROSITE" id="PS01317">
    <property type="entry name" value="SSRP"/>
    <property type="match status" value="1"/>
</dbReference>
<sequence length="167" mass="19050">MSKNSVKDKAKSATANKTIALNKRARHEYHIEERFEAGLALQGWEVKSIRAGRGNIIDAYAYVKQGEIFLIGAQITPLIQASTHVVANDRRERKLLLHRSEIDKLVGKVERDGYTIVPTAMYWSKNKIKLEVALAKGKQTHDKRDAAKDRDWAIEKQRVMRRGNRDA</sequence>
<organism>
    <name type="scientific">Stenotrophomonas maltophilia (strain R551-3)</name>
    <dbReference type="NCBI Taxonomy" id="391008"/>
    <lineage>
        <taxon>Bacteria</taxon>
        <taxon>Pseudomonadati</taxon>
        <taxon>Pseudomonadota</taxon>
        <taxon>Gammaproteobacteria</taxon>
        <taxon>Lysobacterales</taxon>
        <taxon>Lysobacteraceae</taxon>
        <taxon>Stenotrophomonas</taxon>
        <taxon>Stenotrophomonas maltophilia group</taxon>
    </lineage>
</organism>
<protein>
    <recommendedName>
        <fullName evidence="1">SsrA-binding protein</fullName>
    </recommendedName>
    <alternativeName>
        <fullName evidence="1">Small protein B</fullName>
    </alternativeName>
</protein>
<name>SSRP_STRM5</name>
<feature type="chain" id="PRO_1000090189" description="SsrA-binding protein">
    <location>
        <begin position="1"/>
        <end position="167"/>
    </location>
</feature>
<gene>
    <name evidence="1" type="primary">smpB</name>
    <name type="ordered locus">Smal_1590</name>
</gene>
<proteinExistence type="inferred from homology"/>
<reference key="1">
    <citation type="submission" date="2008-06" db="EMBL/GenBank/DDBJ databases">
        <title>Complete sequence of Stenotrophomonas maltophilia R551-3.</title>
        <authorList>
            <consortium name="US DOE Joint Genome Institute"/>
            <person name="Lucas S."/>
            <person name="Copeland A."/>
            <person name="Lapidus A."/>
            <person name="Glavina del Rio T."/>
            <person name="Dalin E."/>
            <person name="Tice H."/>
            <person name="Pitluck S."/>
            <person name="Chain P."/>
            <person name="Malfatti S."/>
            <person name="Shin M."/>
            <person name="Vergez L."/>
            <person name="Lang D."/>
            <person name="Schmutz J."/>
            <person name="Larimer F."/>
            <person name="Land M."/>
            <person name="Hauser L."/>
            <person name="Kyrpides N."/>
            <person name="Mikhailova N."/>
            <person name="Taghavi S."/>
            <person name="Monchy S."/>
            <person name="Newman L."/>
            <person name="Vangronsveld J."/>
            <person name="van der Lelie D."/>
            <person name="Richardson P."/>
        </authorList>
    </citation>
    <scope>NUCLEOTIDE SEQUENCE [LARGE SCALE GENOMIC DNA]</scope>
    <source>
        <strain>R551-3</strain>
    </source>
</reference>